<organism>
    <name type="scientific">Arthrobacter sp. (strain FB24)</name>
    <dbReference type="NCBI Taxonomy" id="290399"/>
    <lineage>
        <taxon>Bacteria</taxon>
        <taxon>Bacillati</taxon>
        <taxon>Actinomycetota</taxon>
        <taxon>Actinomycetes</taxon>
        <taxon>Micrococcales</taxon>
        <taxon>Micrococcaceae</taxon>
        <taxon>Arthrobacter</taxon>
    </lineage>
</organism>
<dbReference type="EMBL" id="CP000454">
    <property type="protein sequence ID" value="ABK04347.1"/>
    <property type="molecule type" value="Genomic_DNA"/>
</dbReference>
<dbReference type="RefSeq" id="WP_011692803.1">
    <property type="nucleotide sequence ID" value="NC_008541.1"/>
</dbReference>
<dbReference type="SMR" id="A0JZ77"/>
<dbReference type="STRING" id="290399.Arth_2968"/>
<dbReference type="KEGG" id="art:Arth_2968"/>
<dbReference type="eggNOG" id="COG0197">
    <property type="taxonomic scope" value="Bacteria"/>
</dbReference>
<dbReference type="HOGENOM" id="CLU_078858_2_1_11"/>
<dbReference type="OrthoDB" id="9802589at2"/>
<dbReference type="Proteomes" id="UP000000754">
    <property type="component" value="Chromosome"/>
</dbReference>
<dbReference type="GO" id="GO:0022625">
    <property type="term" value="C:cytosolic large ribosomal subunit"/>
    <property type="evidence" value="ECO:0007669"/>
    <property type="project" value="TreeGrafter"/>
</dbReference>
<dbReference type="GO" id="GO:0019843">
    <property type="term" value="F:rRNA binding"/>
    <property type="evidence" value="ECO:0007669"/>
    <property type="project" value="UniProtKB-UniRule"/>
</dbReference>
<dbReference type="GO" id="GO:0003735">
    <property type="term" value="F:structural constituent of ribosome"/>
    <property type="evidence" value="ECO:0007669"/>
    <property type="project" value="InterPro"/>
</dbReference>
<dbReference type="GO" id="GO:0000049">
    <property type="term" value="F:tRNA binding"/>
    <property type="evidence" value="ECO:0007669"/>
    <property type="project" value="UniProtKB-KW"/>
</dbReference>
<dbReference type="GO" id="GO:0006412">
    <property type="term" value="P:translation"/>
    <property type="evidence" value="ECO:0007669"/>
    <property type="project" value="UniProtKB-UniRule"/>
</dbReference>
<dbReference type="CDD" id="cd01433">
    <property type="entry name" value="Ribosomal_L16_L10e"/>
    <property type="match status" value="1"/>
</dbReference>
<dbReference type="FunFam" id="3.90.1170.10:FF:000001">
    <property type="entry name" value="50S ribosomal protein L16"/>
    <property type="match status" value="1"/>
</dbReference>
<dbReference type="Gene3D" id="3.90.1170.10">
    <property type="entry name" value="Ribosomal protein L10e/L16"/>
    <property type="match status" value="1"/>
</dbReference>
<dbReference type="HAMAP" id="MF_01342">
    <property type="entry name" value="Ribosomal_uL16"/>
    <property type="match status" value="1"/>
</dbReference>
<dbReference type="InterPro" id="IPR047873">
    <property type="entry name" value="Ribosomal_uL16"/>
</dbReference>
<dbReference type="InterPro" id="IPR000114">
    <property type="entry name" value="Ribosomal_uL16_bact-type"/>
</dbReference>
<dbReference type="InterPro" id="IPR020798">
    <property type="entry name" value="Ribosomal_uL16_CS"/>
</dbReference>
<dbReference type="InterPro" id="IPR016180">
    <property type="entry name" value="Ribosomal_uL16_dom"/>
</dbReference>
<dbReference type="InterPro" id="IPR036920">
    <property type="entry name" value="Ribosomal_uL16_sf"/>
</dbReference>
<dbReference type="NCBIfam" id="TIGR01164">
    <property type="entry name" value="rplP_bact"/>
    <property type="match status" value="1"/>
</dbReference>
<dbReference type="PANTHER" id="PTHR12220">
    <property type="entry name" value="50S/60S RIBOSOMAL PROTEIN L16"/>
    <property type="match status" value="1"/>
</dbReference>
<dbReference type="PANTHER" id="PTHR12220:SF13">
    <property type="entry name" value="LARGE RIBOSOMAL SUBUNIT PROTEIN UL16M"/>
    <property type="match status" value="1"/>
</dbReference>
<dbReference type="Pfam" id="PF00252">
    <property type="entry name" value="Ribosomal_L16"/>
    <property type="match status" value="1"/>
</dbReference>
<dbReference type="PRINTS" id="PR00060">
    <property type="entry name" value="RIBOSOMALL16"/>
</dbReference>
<dbReference type="SUPFAM" id="SSF54686">
    <property type="entry name" value="Ribosomal protein L16p/L10e"/>
    <property type="match status" value="1"/>
</dbReference>
<dbReference type="PROSITE" id="PS00586">
    <property type="entry name" value="RIBOSOMAL_L16_1"/>
    <property type="match status" value="1"/>
</dbReference>
<dbReference type="PROSITE" id="PS00701">
    <property type="entry name" value="RIBOSOMAL_L16_2"/>
    <property type="match status" value="1"/>
</dbReference>
<sequence length="138" mass="15435">MLIPRRVKHRKQHHPGRSGAATGGTKVSFGEWGIQALSPAYVTNRQIESARIAMTRHIKRGGKVWINIYPDRPLTKKPAETRMGSGKGSPEWWVSNVKPGRVLFELSGVSEEVAREALRLAIHKLPLKARIVRREGGE</sequence>
<protein>
    <recommendedName>
        <fullName evidence="1">Large ribosomal subunit protein uL16</fullName>
    </recommendedName>
    <alternativeName>
        <fullName evidence="3">50S ribosomal protein L16</fullName>
    </alternativeName>
</protein>
<keyword id="KW-1185">Reference proteome</keyword>
<keyword id="KW-0687">Ribonucleoprotein</keyword>
<keyword id="KW-0689">Ribosomal protein</keyword>
<keyword id="KW-0694">RNA-binding</keyword>
<keyword id="KW-0699">rRNA-binding</keyword>
<keyword id="KW-0820">tRNA-binding</keyword>
<comment type="function">
    <text evidence="1">Binds 23S rRNA and is also seen to make contacts with the A and possibly P site tRNAs.</text>
</comment>
<comment type="subunit">
    <text evidence="1">Part of the 50S ribosomal subunit.</text>
</comment>
<comment type="similarity">
    <text evidence="1">Belongs to the universal ribosomal protein uL16 family.</text>
</comment>
<name>RL16_ARTS2</name>
<feature type="chain" id="PRO_1000054577" description="Large ribosomal subunit protein uL16">
    <location>
        <begin position="1"/>
        <end position="138"/>
    </location>
</feature>
<feature type="region of interest" description="Disordered" evidence="2">
    <location>
        <begin position="1"/>
        <end position="24"/>
    </location>
</feature>
<feature type="compositionally biased region" description="Basic residues" evidence="2">
    <location>
        <begin position="1"/>
        <end position="16"/>
    </location>
</feature>
<proteinExistence type="inferred from homology"/>
<reference key="1">
    <citation type="journal article" date="2013" name="Stand. Genomic Sci.">
        <title>Complete genome sequence of Arthrobacter sp. strain FB24.</title>
        <authorList>
            <person name="Nakatsu C.H."/>
            <person name="Barabote R."/>
            <person name="Thompson S."/>
            <person name="Bruce D."/>
            <person name="Detter C."/>
            <person name="Brettin T."/>
            <person name="Han C."/>
            <person name="Beasley F."/>
            <person name="Chen W."/>
            <person name="Konopka A."/>
            <person name="Xie G."/>
        </authorList>
    </citation>
    <scope>NUCLEOTIDE SEQUENCE [LARGE SCALE GENOMIC DNA]</scope>
    <source>
        <strain>FB24</strain>
    </source>
</reference>
<evidence type="ECO:0000255" key="1">
    <source>
        <dbReference type="HAMAP-Rule" id="MF_01342"/>
    </source>
</evidence>
<evidence type="ECO:0000256" key="2">
    <source>
        <dbReference type="SAM" id="MobiDB-lite"/>
    </source>
</evidence>
<evidence type="ECO:0000305" key="3"/>
<gene>
    <name evidence="1" type="primary">rplP</name>
    <name type="ordered locus">Arth_2968</name>
</gene>
<accession>A0JZ77</accession>